<comment type="function">
    <text evidence="1">F(1)F(0) ATP synthase produces ATP from ADP in the presence of a proton or sodium gradient. F-type ATPases consist of two structural domains, F(1) containing the extramembraneous catalytic core and F(0) containing the membrane proton channel, linked together by a central stalk and a peripheral stalk. During catalysis, ATP synthesis in the catalytic domain of F(1) is coupled via a rotary mechanism of the central stalk subunits to proton translocation.</text>
</comment>
<comment type="function">
    <text evidence="1">Key component of the F(0) channel; it plays a direct role in translocation across the membrane. A homomeric c-ring of between 10-14 subunits forms the central stalk rotor element with the F(1) delta and epsilon subunits.</text>
</comment>
<comment type="subunit">
    <text evidence="1">F-type ATPases have 2 components, F(1) - the catalytic core - and F(0) - the membrane proton channel. F(1) has five subunits: alpha(3), beta(3), gamma(1), delta(1), epsilon(1). F(0) has four main subunits: a(1), b(1), b'(1) and c(10-14). The alpha and beta chains form an alternating ring which encloses part of the gamma chain. F(1) is attached to F(0) by a central stalk formed by the gamma and epsilon chains, while a peripheral stalk is formed by the delta, b and b' chains.</text>
</comment>
<comment type="subcellular location">
    <subcellularLocation>
        <location evidence="1">Plastid</location>
        <location evidence="1">Chloroplast thylakoid membrane</location>
        <topology evidence="1">Multi-pass membrane protein</topology>
    </subcellularLocation>
</comment>
<comment type="miscellaneous">
    <text>In plastids the F-type ATPase is also known as CF(1)CF(0).</text>
</comment>
<comment type="similarity">
    <text evidence="1">Belongs to the ATPase C chain family.</text>
</comment>
<sequence length="81" mass="7990">MNPLISAASVIAAGLAVGLASIGPGVGQGTAAGQAVEGIARQPEAEGKIRGTLLLSLAFMEALTIYGLVVALALLFANPFV</sequence>
<name>ATPH_ILLOL</name>
<dbReference type="EMBL" id="EF380354">
    <property type="protein sequence ID" value="ABQ52506.1"/>
    <property type="molecule type" value="Genomic_DNA"/>
</dbReference>
<dbReference type="RefSeq" id="YP_001294257.1">
    <property type="nucleotide sequence ID" value="NC_009600.1"/>
</dbReference>
<dbReference type="SMR" id="A6MMT1"/>
<dbReference type="GeneID" id="5236744"/>
<dbReference type="GO" id="GO:0009535">
    <property type="term" value="C:chloroplast thylakoid membrane"/>
    <property type="evidence" value="ECO:0007669"/>
    <property type="project" value="UniProtKB-SubCell"/>
</dbReference>
<dbReference type="GO" id="GO:0045259">
    <property type="term" value="C:proton-transporting ATP synthase complex"/>
    <property type="evidence" value="ECO:0007669"/>
    <property type="project" value="UniProtKB-KW"/>
</dbReference>
<dbReference type="GO" id="GO:0033177">
    <property type="term" value="C:proton-transporting two-sector ATPase complex, proton-transporting domain"/>
    <property type="evidence" value="ECO:0007669"/>
    <property type="project" value="InterPro"/>
</dbReference>
<dbReference type="GO" id="GO:0008289">
    <property type="term" value="F:lipid binding"/>
    <property type="evidence" value="ECO:0007669"/>
    <property type="project" value="UniProtKB-KW"/>
</dbReference>
<dbReference type="GO" id="GO:0046933">
    <property type="term" value="F:proton-transporting ATP synthase activity, rotational mechanism"/>
    <property type="evidence" value="ECO:0007669"/>
    <property type="project" value="UniProtKB-UniRule"/>
</dbReference>
<dbReference type="CDD" id="cd18183">
    <property type="entry name" value="ATP-synt_Fo_c_ATPH"/>
    <property type="match status" value="1"/>
</dbReference>
<dbReference type="FunFam" id="1.20.20.10:FF:000001">
    <property type="entry name" value="ATP synthase subunit c, chloroplastic"/>
    <property type="match status" value="1"/>
</dbReference>
<dbReference type="Gene3D" id="1.20.20.10">
    <property type="entry name" value="F1F0 ATP synthase subunit C"/>
    <property type="match status" value="1"/>
</dbReference>
<dbReference type="HAMAP" id="MF_01396">
    <property type="entry name" value="ATP_synth_c_bact"/>
    <property type="match status" value="1"/>
</dbReference>
<dbReference type="InterPro" id="IPR005953">
    <property type="entry name" value="ATP_synth_csu_bac/chlpt"/>
</dbReference>
<dbReference type="InterPro" id="IPR000454">
    <property type="entry name" value="ATP_synth_F0_csu"/>
</dbReference>
<dbReference type="InterPro" id="IPR020537">
    <property type="entry name" value="ATP_synth_F0_csu_DDCD_BS"/>
</dbReference>
<dbReference type="InterPro" id="IPR038662">
    <property type="entry name" value="ATP_synth_F0_csu_sf"/>
</dbReference>
<dbReference type="InterPro" id="IPR002379">
    <property type="entry name" value="ATPase_proteolipid_c-like_dom"/>
</dbReference>
<dbReference type="InterPro" id="IPR035921">
    <property type="entry name" value="F/V-ATP_Csub_sf"/>
</dbReference>
<dbReference type="NCBIfam" id="TIGR01260">
    <property type="entry name" value="ATP_synt_c"/>
    <property type="match status" value="1"/>
</dbReference>
<dbReference type="NCBIfam" id="NF005608">
    <property type="entry name" value="PRK07354.1"/>
    <property type="match status" value="1"/>
</dbReference>
<dbReference type="PANTHER" id="PTHR10031">
    <property type="entry name" value="ATP SYNTHASE LIPID-BINDING PROTEIN, MITOCHONDRIAL"/>
    <property type="match status" value="1"/>
</dbReference>
<dbReference type="PANTHER" id="PTHR10031:SF0">
    <property type="entry name" value="ATPASE PROTEIN 9"/>
    <property type="match status" value="1"/>
</dbReference>
<dbReference type="Pfam" id="PF00137">
    <property type="entry name" value="ATP-synt_C"/>
    <property type="match status" value="1"/>
</dbReference>
<dbReference type="PRINTS" id="PR00124">
    <property type="entry name" value="ATPASEC"/>
</dbReference>
<dbReference type="SUPFAM" id="SSF81333">
    <property type="entry name" value="F1F0 ATP synthase subunit C"/>
    <property type="match status" value="1"/>
</dbReference>
<dbReference type="PROSITE" id="PS00605">
    <property type="entry name" value="ATPASE_C"/>
    <property type="match status" value="1"/>
</dbReference>
<reference key="1">
    <citation type="journal article" date="2007" name="Mol. Phylogenet. Evol.">
        <title>Phylogenetic and evolutionary implications of complete chloroplast genome sequences of four early-diverging angiosperms: Buxus (Buxaceae), Chloranthus (Chloranthaceae), Dioscorea (Dioscoreaceae), and Illicium (Schisandraceae).</title>
        <authorList>
            <person name="Hansen D.R."/>
            <person name="Dastidar S.G."/>
            <person name="Cai Z."/>
            <person name="Penaflor C."/>
            <person name="Kuehl J.V."/>
            <person name="Boore J.L."/>
            <person name="Jansen R.K."/>
        </authorList>
    </citation>
    <scope>NUCLEOTIDE SEQUENCE [LARGE SCALE GENOMIC DNA]</scope>
</reference>
<proteinExistence type="inferred from homology"/>
<feature type="chain" id="PRO_0000362924" description="ATP synthase subunit c, chloroplastic">
    <location>
        <begin position="1"/>
        <end position="81"/>
    </location>
</feature>
<feature type="transmembrane region" description="Helical" evidence="1">
    <location>
        <begin position="3"/>
        <end position="23"/>
    </location>
</feature>
<feature type="transmembrane region" description="Helical" evidence="1">
    <location>
        <begin position="57"/>
        <end position="77"/>
    </location>
</feature>
<feature type="site" description="Reversibly protonated during proton transport" evidence="1">
    <location>
        <position position="61"/>
    </location>
</feature>
<evidence type="ECO:0000255" key="1">
    <source>
        <dbReference type="HAMAP-Rule" id="MF_01396"/>
    </source>
</evidence>
<organism>
    <name type="scientific">Illicium oligandrum</name>
    <name type="common">Star anise</name>
    <dbReference type="NCBI Taxonomy" id="145286"/>
    <lineage>
        <taxon>Eukaryota</taxon>
        <taxon>Viridiplantae</taxon>
        <taxon>Streptophyta</taxon>
        <taxon>Embryophyta</taxon>
        <taxon>Tracheophyta</taxon>
        <taxon>Spermatophyta</taxon>
        <taxon>Magnoliopsida</taxon>
        <taxon>Austrobaileyales</taxon>
        <taxon>Schisandraceae</taxon>
        <taxon>Illicium</taxon>
    </lineage>
</organism>
<accession>A6MMT1</accession>
<geneLocation type="chloroplast"/>
<gene>
    <name evidence="1" type="primary">atpH</name>
</gene>
<keyword id="KW-0066">ATP synthesis</keyword>
<keyword id="KW-0138">CF(0)</keyword>
<keyword id="KW-0150">Chloroplast</keyword>
<keyword id="KW-0375">Hydrogen ion transport</keyword>
<keyword id="KW-0406">Ion transport</keyword>
<keyword id="KW-0446">Lipid-binding</keyword>
<keyword id="KW-0472">Membrane</keyword>
<keyword id="KW-0934">Plastid</keyword>
<keyword id="KW-0793">Thylakoid</keyword>
<keyword id="KW-0812">Transmembrane</keyword>
<keyword id="KW-1133">Transmembrane helix</keyword>
<keyword id="KW-0813">Transport</keyword>
<protein>
    <recommendedName>
        <fullName evidence="1">ATP synthase subunit c, chloroplastic</fullName>
    </recommendedName>
    <alternativeName>
        <fullName evidence="1">ATP synthase F(0) sector subunit c</fullName>
    </alternativeName>
    <alternativeName>
        <fullName evidence="1">ATPase subunit III</fullName>
    </alternativeName>
    <alternativeName>
        <fullName evidence="1">F-type ATPase subunit c</fullName>
        <shortName evidence="1">F-ATPase subunit c</shortName>
    </alternativeName>
    <alternativeName>
        <fullName evidence="1">Lipid-binding protein</fullName>
    </alternativeName>
</protein>